<feature type="chain" id="PRO_0000246987" description="7-cyano-7-deazaguanine synthase">
    <location>
        <begin position="1"/>
        <end position="239"/>
    </location>
</feature>
<feature type="binding site" evidence="1">
    <location>
        <begin position="8"/>
        <end position="18"/>
    </location>
    <ligand>
        <name>ATP</name>
        <dbReference type="ChEBI" id="CHEBI:30616"/>
    </ligand>
</feature>
<feature type="binding site" evidence="1">
    <location>
        <position position="194"/>
    </location>
    <ligand>
        <name>Zn(2+)</name>
        <dbReference type="ChEBI" id="CHEBI:29105"/>
    </ligand>
</feature>
<feature type="binding site" evidence="1">
    <location>
        <position position="209"/>
    </location>
    <ligand>
        <name>Zn(2+)</name>
        <dbReference type="ChEBI" id="CHEBI:29105"/>
    </ligand>
</feature>
<feature type="binding site" evidence="1">
    <location>
        <position position="212"/>
    </location>
    <ligand>
        <name>Zn(2+)</name>
        <dbReference type="ChEBI" id="CHEBI:29105"/>
    </ligand>
</feature>
<feature type="binding site" evidence="1">
    <location>
        <position position="215"/>
    </location>
    <ligand>
        <name>Zn(2+)</name>
        <dbReference type="ChEBI" id="CHEBI:29105"/>
    </ligand>
</feature>
<sequence>MKRGVVLFSGGLDSTACLYWAKRHYDEVIMLTINYGSREESVMNKVAEFFSKELKIPLKIIRVNFLNEFSKLSGSALVEGNVPRVSASELEVIERAKETARSVWVPARNLVLISIAASLLDALGGGDIIVGFNKEEGETFPDNTKEFVERVNKALEYATMNKVRVVAPLIELDKRGIARLLKELGAKYEYSNSCYDPKGFTEDGKPIHCGRCESCVRRHRGLMEGIGEDKTVYLVTPKL</sequence>
<dbReference type="EC" id="6.3.4.20" evidence="1"/>
<dbReference type="EMBL" id="BA000001">
    <property type="protein sequence ID" value="BAA29154.1"/>
    <property type="status" value="ALT_INIT"/>
    <property type="molecule type" value="Genomic_DNA"/>
</dbReference>
<dbReference type="PIR" id="C71228">
    <property type="entry name" value="C71228"/>
</dbReference>
<dbReference type="RefSeq" id="WP_048053026.1">
    <property type="nucleotide sequence ID" value="NC_000961.1"/>
</dbReference>
<dbReference type="SMR" id="O57836"/>
<dbReference type="STRING" id="70601.gene:9376993"/>
<dbReference type="EnsemblBacteria" id="BAA29154">
    <property type="protein sequence ID" value="BAA29154"/>
    <property type="gene ID" value="BAA29154"/>
</dbReference>
<dbReference type="GeneID" id="1443987"/>
<dbReference type="KEGG" id="pho:PH0085"/>
<dbReference type="eggNOG" id="arCOG00039">
    <property type="taxonomic scope" value="Archaea"/>
</dbReference>
<dbReference type="OrthoDB" id="6532at2157"/>
<dbReference type="UniPathway" id="UPA00391"/>
<dbReference type="Proteomes" id="UP000000752">
    <property type="component" value="Chromosome"/>
</dbReference>
<dbReference type="GO" id="GO:0005524">
    <property type="term" value="F:ATP binding"/>
    <property type="evidence" value="ECO:0007669"/>
    <property type="project" value="UniProtKB-UniRule"/>
</dbReference>
<dbReference type="GO" id="GO:0016879">
    <property type="term" value="F:ligase activity, forming carbon-nitrogen bonds"/>
    <property type="evidence" value="ECO:0007669"/>
    <property type="project" value="UniProtKB-UniRule"/>
</dbReference>
<dbReference type="GO" id="GO:0008270">
    <property type="term" value="F:zinc ion binding"/>
    <property type="evidence" value="ECO:0007669"/>
    <property type="project" value="UniProtKB-UniRule"/>
</dbReference>
<dbReference type="CDD" id="cd01995">
    <property type="entry name" value="QueC-like"/>
    <property type="match status" value="1"/>
</dbReference>
<dbReference type="Gene3D" id="3.40.50.620">
    <property type="entry name" value="HUPs"/>
    <property type="match status" value="1"/>
</dbReference>
<dbReference type="HAMAP" id="MF_01633">
    <property type="entry name" value="QueC"/>
    <property type="match status" value="1"/>
</dbReference>
<dbReference type="InterPro" id="IPR018317">
    <property type="entry name" value="QueC"/>
</dbReference>
<dbReference type="InterPro" id="IPR014729">
    <property type="entry name" value="Rossmann-like_a/b/a_fold"/>
</dbReference>
<dbReference type="NCBIfam" id="TIGR00364">
    <property type="entry name" value="7-cyano-7-deazaguanine synthase QueC"/>
    <property type="match status" value="1"/>
</dbReference>
<dbReference type="PANTHER" id="PTHR42914">
    <property type="entry name" value="7-CYANO-7-DEAZAGUANINE SYNTHASE"/>
    <property type="match status" value="1"/>
</dbReference>
<dbReference type="PANTHER" id="PTHR42914:SF1">
    <property type="entry name" value="7-CYANO-7-DEAZAGUANINE SYNTHASE"/>
    <property type="match status" value="1"/>
</dbReference>
<dbReference type="Pfam" id="PF06508">
    <property type="entry name" value="QueC"/>
    <property type="match status" value="1"/>
</dbReference>
<dbReference type="PIRSF" id="PIRSF006293">
    <property type="entry name" value="ExsB"/>
    <property type="match status" value="1"/>
</dbReference>
<dbReference type="SUPFAM" id="SSF52402">
    <property type="entry name" value="Adenine nucleotide alpha hydrolases-like"/>
    <property type="match status" value="1"/>
</dbReference>
<name>QUEC_PYRHO</name>
<accession>O57836</accession>
<proteinExistence type="inferred from homology"/>
<keyword id="KW-0067">ATP-binding</keyword>
<keyword id="KW-0436">Ligase</keyword>
<keyword id="KW-0479">Metal-binding</keyword>
<keyword id="KW-0547">Nucleotide-binding</keyword>
<keyword id="KW-0862">Zinc</keyword>
<organism>
    <name type="scientific">Pyrococcus horikoshii (strain ATCC 700860 / DSM 12428 / JCM 9974 / NBRC 100139 / OT-3)</name>
    <dbReference type="NCBI Taxonomy" id="70601"/>
    <lineage>
        <taxon>Archaea</taxon>
        <taxon>Methanobacteriati</taxon>
        <taxon>Methanobacteriota</taxon>
        <taxon>Thermococci</taxon>
        <taxon>Thermococcales</taxon>
        <taxon>Thermococcaceae</taxon>
        <taxon>Pyrococcus</taxon>
    </lineage>
</organism>
<reference key="1">
    <citation type="journal article" date="1998" name="DNA Res.">
        <title>Complete sequence and gene organization of the genome of a hyper-thermophilic archaebacterium, Pyrococcus horikoshii OT3.</title>
        <authorList>
            <person name="Kawarabayasi Y."/>
            <person name="Sawada M."/>
            <person name="Horikawa H."/>
            <person name="Haikawa Y."/>
            <person name="Hino Y."/>
            <person name="Yamamoto S."/>
            <person name="Sekine M."/>
            <person name="Baba S."/>
            <person name="Kosugi H."/>
            <person name="Hosoyama A."/>
            <person name="Nagai Y."/>
            <person name="Sakai M."/>
            <person name="Ogura K."/>
            <person name="Otsuka R."/>
            <person name="Nakazawa H."/>
            <person name="Takamiya M."/>
            <person name="Ohfuku Y."/>
            <person name="Funahashi T."/>
            <person name="Tanaka T."/>
            <person name="Kudoh Y."/>
            <person name="Yamazaki J."/>
            <person name="Kushida N."/>
            <person name="Oguchi A."/>
            <person name="Aoki K."/>
            <person name="Yoshizawa T."/>
            <person name="Nakamura Y."/>
            <person name="Robb F.T."/>
            <person name="Horikoshi K."/>
            <person name="Masuchi Y."/>
            <person name="Shizuya H."/>
            <person name="Kikuchi H."/>
        </authorList>
    </citation>
    <scope>NUCLEOTIDE SEQUENCE [LARGE SCALE GENOMIC DNA]</scope>
    <source>
        <strain>ATCC 700860 / DSM 12428 / JCM 9974 / NBRC 100139 / OT-3</strain>
    </source>
</reference>
<evidence type="ECO:0000255" key="1">
    <source>
        <dbReference type="HAMAP-Rule" id="MF_01633"/>
    </source>
</evidence>
<evidence type="ECO:0000305" key="2"/>
<gene>
    <name evidence="1" type="primary">queC</name>
    <name type="ordered locus">PH0085</name>
</gene>
<protein>
    <recommendedName>
        <fullName evidence="1">7-cyano-7-deazaguanine synthase</fullName>
        <ecNumber evidence="1">6.3.4.20</ecNumber>
    </recommendedName>
    <alternativeName>
        <fullName evidence="1">7-cyano-7-carbaguanine synthase</fullName>
    </alternativeName>
    <alternativeName>
        <fullName evidence="1">Archaeosine biosynthesis protein QueC</fullName>
    </alternativeName>
    <alternativeName>
        <fullName evidence="1">PreQ(0) synthase</fullName>
    </alternativeName>
</protein>
<comment type="function">
    <text evidence="1">Catalyzes the ATP-dependent conversion of 7-carboxy-7-deazaguanine (CDG) to 7-cyano-7-deazaguanine (preQ(0)).</text>
</comment>
<comment type="catalytic activity">
    <reaction evidence="1">
        <text>7-carboxy-7-deazaguanine + NH4(+) + ATP = 7-cyano-7-deazaguanine + ADP + phosphate + H2O + H(+)</text>
        <dbReference type="Rhea" id="RHEA:27982"/>
        <dbReference type="ChEBI" id="CHEBI:15377"/>
        <dbReference type="ChEBI" id="CHEBI:15378"/>
        <dbReference type="ChEBI" id="CHEBI:28938"/>
        <dbReference type="ChEBI" id="CHEBI:30616"/>
        <dbReference type="ChEBI" id="CHEBI:43474"/>
        <dbReference type="ChEBI" id="CHEBI:45075"/>
        <dbReference type="ChEBI" id="CHEBI:61036"/>
        <dbReference type="ChEBI" id="CHEBI:456216"/>
        <dbReference type="EC" id="6.3.4.20"/>
    </reaction>
</comment>
<comment type="cofactor">
    <cofactor evidence="1">
        <name>Zn(2+)</name>
        <dbReference type="ChEBI" id="CHEBI:29105"/>
    </cofactor>
    <text evidence="1">Binds 1 zinc ion per subunit.</text>
</comment>
<comment type="pathway">
    <text evidence="1">Purine metabolism; 7-cyano-7-deazaguanine biosynthesis.</text>
</comment>
<comment type="similarity">
    <text evidence="1">Belongs to the QueC family.</text>
</comment>
<comment type="sequence caution" evidence="2">
    <conflict type="erroneous initiation">
        <sequence resource="EMBL-CDS" id="BAA29154"/>
    </conflict>
</comment>